<evidence type="ECO:0000255" key="1">
    <source>
        <dbReference type="HAMAP-Rule" id="MF_00175"/>
    </source>
</evidence>
<evidence type="ECO:0000255" key="2">
    <source>
        <dbReference type="PROSITE-ProRule" id="PRU01250"/>
    </source>
</evidence>
<evidence type="ECO:0000305" key="3"/>
<accession>Q63V40</accession>
<organism>
    <name type="scientific">Burkholderia pseudomallei (strain K96243)</name>
    <dbReference type="NCBI Taxonomy" id="272560"/>
    <lineage>
        <taxon>Bacteria</taxon>
        <taxon>Pseudomonadati</taxon>
        <taxon>Pseudomonadota</taxon>
        <taxon>Betaproteobacteria</taxon>
        <taxon>Burkholderiales</taxon>
        <taxon>Burkholderiaceae</taxon>
        <taxon>Burkholderia</taxon>
        <taxon>pseudomallei group</taxon>
    </lineage>
</organism>
<reference key="1">
    <citation type="journal article" date="2004" name="Proc. Natl. Acad. Sci. U.S.A.">
        <title>Genomic plasticity of the causative agent of melioidosis, Burkholderia pseudomallei.</title>
        <authorList>
            <person name="Holden M.T.G."/>
            <person name="Titball R.W."/>
            <person name="Peacock S.J."/>
            <person name="Cerdeno-Tarraga A.-M."/>
            <person name="Atkins T."/>
            <person name="Crossman L.C."/>
            <person name="Pitt T."/>
            <person name="Churcher C."/>
            <person name="Mungall K.L."/>
            <person name="Bentley S.D."/>
            <person name="Sebaihia M."/>
            <person name="Thomson N.R."/>
            <person name="Bason N."/>
            <person name="Beacham I.R."/>
            <person name="Brooks K."/>
            <person name="Brown K.A."/>
            <person name="Brown N.F."/>
            <person name="Challis G.L."/>
            <person name="Cherevach I."/>
            <person name="Chillingworth T."/>
            <person name="Cronin A."/>
            <person name="Crossett B."/>
            <person name="Davis P."/>
            <person name="DeShazer D."/>
            <person name="Feltwell T."/>
            <person name="Fraser A."/>
            <person name="Hance Z."/>
            <person name="Hauser H."/>
            <person name="Holroyd S."/>
            <person name="Jagels K."/>
            <person name="Keith K.E."/>
            <person name="Maddison M."/>
            <person name="Moule S."/>
            <person name="Price C."/>
            <person name="Quail M.A."/>
            <person name="Rabbinowitsch E."/>
            <person name="Rutherford K."/>
            <person name="Sanders M."/>
            <person name="Simmonds M."/>
            <person name="Songsivilai S."/>
            <person name="Stevens K."/>
            <person name="Tumapa S."/>
            <person name="Vesaratchavest M."/>
            <person name="Whitehead S."/>
            <person name="Yeats C."/>
            <person name="Barrell B.G."/>
            <person name="Oyston P.C.F."/>
            <person name="Parkhill J."/>
        </authorList>
    </citation>
    <scope>NUCLEOTIDE SEQUENCE [LARGE SCALE GENOMIC DNA]</scope>
    <source>
        <strain>K96243</strain>
    </source>
</reference>
<comment type="function">
    <text evidence="1">ATP-dependent specificity component of the Clp protease. It directs the protease to specific substrates. Can perform chaperone functions in the absence of ClpP.</text>
</comment>
<comment type="subunit">
    <text evidence="1">Component of the ClpX-ClpP complex. Forms a hexameric ring that, in the presence of ATP, binds to fourteen ClpP subunits assembled into a disk-like structure with a central cavity, resembling the structure of eukaryotic proteasomes.</text>
</comment>
<comment type="similarity">
    <text evidence="1">Belongs to the ClpX chaperone family.</text>
</comment>
<comment type="sequence caution" evidence="3">
    <conflict type="erroneous initiation">
        <sequence resource="EMBL-CDS" id="CAH35405"/>
    </conflict>
</comment>
<sequence>MADKKGSNSEKLLYCSFCGKSQHEVKKLIAGPSVFICDECIDLCNEIIRDEAAAAGVEASLSKSDLPSPQEIRDILDQYVIGQERAKKILAVAVYNHYKRLKHLDKKDDVELSKSNILLIGPTGSGKTLLAQTLARLLNVPFVIADATTLTEAGYVGEDVENIIQKLLQNCNYEVEKAQRGIVYIDEIDKISRKSDNPSITRDVSGEGVQQALLKLVEGTMASVPPQGGRKHPNQDFIQVDTTNILFICGGAFDGLEKVITDRTEKTGIGFGATVKSKQERDAGEVLREVEPEDLIKFGLIPELIGRLPVVATLGKLDEAALMKILVEPKNALVKQYQKLFAMERVELEIRPDALQAVARKAIRRKTGARGLRSIIEQALLDVMYELPTLKGVSKVIIDDNVIEGDGKPLLIYEDTPKVAGSN</sequence>
<dbReference type="EMBL" id="BX571965">
    <property type="protein sequence ID" value="CAH35405.1"/>
    <property type="status" value="ALT_INIT"/>
    <property type="molecule type" value="Genomic_DNA"/>
</dbReference>
<dbReference type="RefSeq" id="WP_004521258.1">
    <property type="nucleotide sequence ID" value="NZ_CP009538.1"/>
</dbReference>
<dbReference type="RefSeq" id="YP_108026.1">
    <property type="nucleotide sequence ID" value="NC_006350.1"/>
</dbReference>
<dbReference type="SMR" id="Q63V40"/>
<dbReference type="STRING" id="272560.BPSL1404"/>
<dbReference type="GeneID" id="93060594"/>
<dbReference type="KEGG" id="bps:BPSL1404"/>
<dbReference type="PATRIC" id="fig|272560.51.peg.3416"/>
<dbReference type="eggNOG" id="COG1219">
    <property type="taxonomic scope" value="Bacteria"/>
</dbReference>
<dbReference type="Proteomes" id="UP000000605">
    <property type="component" value="Chromosome 1"/>
</dbReference>
<dbReference type="GO" id="GO:0009376">
    <property type="term" value="C:HslUV protease complex"/>
    <property type="evidence" value="ECO:0007669"/>
    <property type="project" value="TreeGrafter"/>
</dbReference>
<dbReference type="GO" id="GO:0005524">
    <property type="term" value="F:ATP binding"/>
    <property type="evidence" value="ECO:0007669"/>
    <property type="project" value="UniProtKB-UniRule"/>
</dbReference>
<dbReference type="GO" id="GO:0016887">
    <property type="term" value="F:ATP hydrolysis activity"/>
    <property type="evidence" value="ECO:0007669"/>
    <property type="project" value="InterPro"/>
</dbReference>
<dbReference type="GO" id="GO:0140662">
    <property type="term" value="F:ATP-dependent protein folding chaperone"/>
    <property type="evidence" value="ECO:0007669"/>
    <property type="project" value="InterPro"/>
</dbReference>
<dbReference type="GO" id="GO:0046983">
    <property type="term" value="F:protein dimerization activity"/>
    <property type="evidence" value="ECO:0007669"/>
    <property type="project" value="InterPro"/>
</dbReference>
<dbReference type="GO" id="GO:0051082">
    <property type="term" value="F:unfolded protein binding"/>
    <property type="evidence" value="ECO:0007669"/>
    <property type="project" value="UniProtKB-UniRule"/>
</dbReference>
<dbReference type="GO" id="GO:0008270">
    <property type="term" value="F:zinc ion binding"/>
    <property type="evidence" value="ECO:0007669"/>
    <property type="project" value="InterPro"/>
</dbReference>
<dbReference type="GO" id="GO:0051301">
    <property type="term" value="P:cell division"/>
    <property type="evidence" value="ECO:0007669"/>
    <property type="project" value="TreeGrafter"/>
</dbReference>
<dbReference type="GO" id="GO:0051603">
    <property type="term" value="P:proteolysis involved in protein catabolic process"/>
    <property type="evidence" value="ECO:0007669"/>
    <property type="project" value="TreeGrafter"/>
</dbReference>
<dbReference type="CDD" id="cd19497">
    <property type="entry name" value="RecA-like_ClpX"/>
    <property type="match status" value="1"/>
</dbReference>
<dbReference type="FunFam" id="1.10.8.60:FF:000002">
    <property type="entry name" value="ATP-dependent Clp protease ATP-binding subunit ClpX"/>
    <property type="match status" value="1"/>
</dbReference>
<dbReference type="FunFam" id="3.40.50.300:FF:000005">
    <property type="entry name" value="ATP-dependent Clp protease ATP-binding subunit ClpX"/>
    <property type="match status" value="1"/>
</dbReference>
<dbReference type="Gene3D" id="1.10.8.60">
    <property type="match status" value="1"/>
</dbReference>
<dbReference type="Gene3D" id="6.20.220.10">
    <property type="entry name" value="ClpX chaperone, C4-type zinc finger domain"/>
    <property type="match status" value="1"/>
</dbReference>
<dbReference type="Gene3D" id="3.40.50.300">
    <property type="entry name" value="P-loop containing nucleotide triphosphate hydrolases"/>
    <property type="match status" value="1"/>
</dbReference>
<dbReference type="HAMAP" id="MF_00175">
    <property type="entry name" value="ClpX"/>
    <property type="match status" value="1"/>
</dbReference>
<dbReference type="InterPro" id="IPR003593">
    <property type="entry name" value="AAA+_ATPase"/>
</dbReference>
<dbReference type="InterPro" id="IPR050052">
    <property type="entry name" value="ATP-dep_Clp_protease_ClpX"/>
</dbReference>
<dbReference type="InterPro" id="IPR003959">
    <property type="entry name" value="ATPase_AAA_core"/>
</dbReference>
<dbReference type="InterPro" id="IPR019489">
    <property type="entry name" value="Clp_ATPase_C"/>
</dbReference>
<dbReference type="InterPro" id="IPR004487">
    <property type="entry name" value="Clp_protease_ATP-bd_su_ClpX"/>
</dbReference>
<dbReference type="InterPro" id="IPR046425">
    <property type="entry name" value="ClpX_bact"/>
</dbReference>
<dbReference type="InterPro" id="IPR027417">
    <property type="entry name" value="P-loop_NTPase"/>
</dbReference>
<dbReference type="InterPro" id="IPR010603">
    <property type="entry name" value="Znf_CppX_C4"/>
</dbReference>
<dbReference type="InterPro" id="IPR038366">
    <property type="entry name" value="Znf_CppX_C4_sf"/>
</dbReference>
<dbReference type="NCBIfam" id="TIGR00382">
    <property type="entry name" value="clpX"/>
    <property type="match status" value="1"/>
</dbReference>
<dbReference type="NCBIfam" id="NF003745">
    <property type="entry name" value="PRK05342.1"/>
    <property type="match status" value="1"/>
</dbReference>
<dbReference type="PANTHER" id="PTHR48102:SF7">
    <property type="entry name" value="ATP-DEPENDENT CLP PROTEASE ATP-BINDING SUBUNIT CLPX-LIKE, MITOCHONDRIAL"/>
    <property type="match status" value="1"/>
</dbReference>
<dbReference type="PANTHER" id="PTHR48102">
    <property type="entry name" value="ATP-DEPENDENT CLP PROTEASE ATP-BINDING SUBUNIT CLPX-LIKE, MITOCHONDRIAL-RELATED"/>
    <property type="match status" value="1"/>
</dbReference>
<dbReference type="Pfam" id="PF07724">
    <property type="entry name" value="AAA_2"/>
    <property type="match status" value="1"/>
</dbReference>
<dbReference type="Pfam" id="PF10431">
    <property type="entry name" value="ClpB_D2-small"/>
    <property type="match status" value="1"/>
</dbReference>
<dbReference type="Pfam" id="PF06689">
    <property type="entry name" value="zf-C4_ClpX"/>
    <property type="match status" value="1"/>
</dbReference>
<dbReference type="SMART" id="SM00382">
    <property type="entry name" value="AAA"/>
    <property type="match status" value="1"/>
</dbReference>
<dbReference type="SMART" id="SM01086">
    <property type="entry name" value="ClpB_D2-small"/>
    <property type="match status" value="1"/>
</dbReference>
<dbReference type="SMART" id="SM00994">
    <property type="entry name" value="zf-C4_ClpX"/>
    <property type="match status" value="1"/>
</dbReference>
<dbReference type="SUPFAM" id="SSF57716">
    <property type="entry name" value="Glucocorticoid receptor-like (DNA-binding domain)"/>
    <property type="match status" value="1"/>
</dbReference>
<dbReference type="SUPFAM" id="SSF52540">
    <property type="entry name" value="P-loop containing nucleoside triphosphate hydrolases"/>
    <property type="match status" value="1"/>
</dbReference>
<dbReference type="PROSITE" id="PS51902">
    <property type="entry name" value="CLPX_ZB"/>
    <property type="match status" value="1"/>
</dbReference>
<name>CLPX_BURPS</name>
<gene>
    <name evidence="1" type="primary">clpX</name>
    <name type="ordered locus">BPSL1404</name>
</gene>
<protein>
    <recommendedName>
        <fullName evidence="1">ATP-dependent Clp protease ATP-binding subunit ClpX</fullName>
    </recommendedName>
</protein>
<keyword id="KW-0067">ATP-binding</keyword>
<keyword id="KW-0143">Chaperone</keyword>
<keyword id="KW-0479">Metal-binding</keyword>
<keyword id="KW-0547">Nucleotide-binding</keyword>
<keyword id="KW-1185">Reference proteome</keyword>
<keyword id="KW-0862">Zinc</keyword>
<proteinExistence type="inferred from homology"/>
<feature type="chain" id="PRO_0000160332" description="ATP-dependent Clp protease ATP-binding subunit ClpX">
    <location>
        <begin position="1"/>
        <end position="423"/>
    </location>
</feature>
<feature type="domain" description="ClpX-type ZB" evidence="2">
    <location>
        <begin position="3"/>
        <end position="56"/>
    </location>
</feature>
<feature type="binding site" evidence="2">
    <location>
        <position position="15"/>
    </location>
    <ligand>
        <name>Zn(2+)</name>
        <dbReference type="ChEBI" id="CHEBI:29105"/>
    </ligand>
</feature>
<feature type="binding site" evidence="2">
    <location>
        <position position="18"/>
    </location>
    <ligand>
        <name>Zn(2+)</name>
        <dbReference type="ChEBI" id="CHEBI:29105"/>
    </ligand>
</feature>
<feature type="binding site" evidence="2">
    <location>
        <position position="37"/>
    </location>
    <ligand>
        <name>Zn(2+)</name>
        <dbReference type="ChEBI" id="CHEBI:29105"/>
    </ligand>
</feature>
<feature type="binding site" evidence="2">
    <location>
        <position position="40"/>
    </location>
    <ligand>
        <name>Zn(2+)</name>
        <dbReference type="ChEBI" id="CHEBI:29105"/>
    </ligand>
</feature>
<feature type="binding site" evidence="1">
    <location>
        <begin position="122"/>
        <end position="129"/>
    </location>
    <ligand>
        <name>ATP</name>
        <dbReference type="ChEBI" id="CHEBI:30616"/>
    </ligand>
</feature>